<proteinExistence type="inferred from homology"/>
<sequence length="315" mass="34419">MMTALILKRVAQAIPVMLIVAILTFLLMKLLPGDPAILIAGDGASPETVERIRVELGLDQPTVVQLGQWLWNLFHFDLGRSFLLSQPVSQAIAERLPVTISLALLAFAITIPVGIIMGVVAAYLRDSWFDTGVMSLALLGVSVPSFWLAILAVILFSVTLGWFPSAGYVPFLDSPLGWLRSLILPASILALFQIGYLARMTRSEMLEVMDQDYIRTARSKGVSEYSVLSTHAFRNALVSVLTVSGYIFSLLIGGSVVIEQIFALPGLGRLLVQAILARDLPVVQGTMLFLGFLFVAINVLVDILYTIADPRVRYD</sequence>
<comment type="function">
    <text evidence="1">Probably part of an ABC transporter complex that could be involved in peptide import. Probably responsible for the translocation of the substrate across the membrane (By similarity).</text>
</comment>
<comment type="subunit">
    <text evidence="3">The complex is composed of two ATP-binding proteins (BMEII0205 and BMEII0206), two transmembrane proteins (BMEII0207/BMEII0208 and BMEII0209) and a solute-binding protein (BMEII0210).</text>
</comment>
<comment type="subcellular location">
    <subcellularLocation>
        <location evidence="3">Cell inner membrane</location>
        <topology evidence="2">Multi-pass membrane protein</topology>
    </subcellularLocation>
</comment>
<comment type="similarity">
    <text evidence="3">Belongs to the binding-protein-dependent transport system permease family.</text>
</comment>
<keyword id="KW-0997">Cell inner membrane</keyword>
<keyword id="KW-1003">Cell membrane</keyword>
<keyword id="KW-0472">Membrane</keyword>
<keyword id="KW-0812">Transmembrane</keyword>
<keyword id="KW-1133">Transmembrane helix</keyword>
<keyword id="KW-0813">Transport</keyword>
<name>Y209_BRUME</name>
<dbReference type="EMBL" id="AE008918">
    <property type="protein sequence ID" value="AAL53450.1"/>
    <property type="molecule type" value="Genomic_DNA"/>
</dbReference>
<dbReference type="PIR" id="AG3535">
    <property type="entry name" value="AG3535"/>
</dbReference>
<dbReference type="SMR" id="Q8YDG7"/>
<dbReference type="KEGG" id="bme:BMEII0209"/>
<dbReference type="eggNOG" id="COG0601">
    <property type="taxonomic scope" value="Bacteria"/>
</dbReference>
<dbReference type="Proteomes" id="UP000000419">
    <property type="component" value="Chromosome II"/>
</dbReference>
<dbReference type="GO" id="GO:0005886">
    <property type="term" value="C:plasma membrane"/>
    <property type="evidence" value="ECO:0007669"/>
    <property type="project" value="UniProtKB-SubCell"/>
</dbReference>
<dbReference type="GO" id="GO:0071916">
    <property type="term" value="F:dipeptide transmembrane transporter activity"/>
    <property type="evidence" value="ECO:0007669"/>
    <property type="project" value="TreeGrafter"/>
</dbReference>
<dbReference type="CDD" id="cd06261">
    <property type="entry name" value="TM_PBP2"/>
    <property type="match status" value="1"/>
</dbReference>
<dbReference type="Gene3D" id="1.10.3720.10">
    <property type="entry name" value="MetI-like"/>
    <property type="match status" value="1"/>
</dbReference>
<dbReference type="InterPro" id="IPR045621">
    <property type="entry name" value="BPD_transp_1_N"/>
</dbReference>
<dbReference type="InterPro" id="IPR000515">
    <property type="entry name" value="MetI-like"/>
</dbReference>
<dbReference type="InterPro" id="IPR035906">
    <property type="entry name" value="MetI-like_sf"/>
</dbReference>
<dbReference type="PANTHER" id="PTHR43163">
    <property type="entry name" value="DIPEPTIDE TRANSPORT SYSTEM PERMEASE PROTEIN DPPB-RELATED"/>
    <property type="match status" value="1"/>
</dbReference>
<dbReference type="PANTHER" id="PTHR43163:SF6">
    <property type="entry name" value="DIPEPTIDE TRANSPORT SYSTEM PERMEASE PROTEIN DPPB-RELATED"/>
    <property type="match status" value="1"/>
</dbReference>
<dbReference type="Pfam" id="PF00528">
    <property type="entry name" value="BPD_transp_1"/>
    <property type="match status" value="1"/>
</dbReference>
<dbReference type="Pfam" id="PF19300">
    <property type="entry name" value="BPD_transp_1_N"/>
    <property type="match status" value="1"/>
</dbReference>
<dbReference type="SUPFAM" id="SSF161098">
    <property type="entry name" value="MetI-like"/>
    <property type="match status" value="1"/>
</dbReference>
<dbReference type="PROSITE" id="PS50928">
    <property type="entry name" value="ABC_TM1"/>
    <property type="match status" value="1"/>
</dbReference>
<organism>
    <name type="scientific">Brucella melitensis biotype 1 (strain ATCC 23456 / CCUG 17765 / NCTC 10094 / 16M)</name>
    <dbReference type="NCBI Taxonomy" id="224914"/>
    <lineage>
        <taxon>Bacteria</taxon>
        <taxon>Pseudomonadati</taxon>
        <taxon>Pseudomonadota</taxon>
        <taxon>Alphaproteobacteria</taxon>
        <taxon>Hyphomicrobiales</taxon>
        <taxon>Brucellaceae</taxon>
        <taxon>Brucella/Ochrobactrum group</taxon>
        <taxon>Brucella</taxon>
    </lineage>
</organism>
<feature type="chain" id="PRO_0000290151" description="Putative peptide transport system permease protein BMEII0209">
    <location>
        <begin position="1"/>
        <end position="315"/>
    </location>
</feature>
<feature type="transmembrane region" description="Helical" evidence="2">
    <location>
        <begin position="13"/>
        <end position="33"/>
    </location>
</feature>
<feature type="transmembrane region" description="Helical" evidence="2">
    <location>
        <begin position="102"/>
        <end position="122"/>
    </location>
</feature>
<feature type="transmembrane region" description="Helical" evidence="2">
    <location>
        <begin position="136"/>
        <end position="156"/>
    </location>
</feature>
<feature type="transmembrane region" description="Helical" evidence="2">
    <location>
        <begin position="178"/>
        <end position="198"/>
    </location>
</feature>
<feature type="transmembrane region" description="Helical" evidence="2">
    <location>
        <begin position="238"/>
        <end position="258"/>
    </location>
</feature>
<feature type="transmembrane region" description="Helical" evidence="2">
    <location>
        <begin position="287"/>
        <end position="307"/>
    </location>
</feature>
<feature type="domain" description="ABC transmembrane type-1" evidence="2">
    <location>
        <begin position="96"/>
        <end position="305"/>
    </location>
</feature>
<accession>Q8YDG7</accession>
<evidence type="ECO:0000250" key="1"/>
<evidence type="ECO:0000255" key="2">
    <source>
        <dbReference type="PROSITE-ProRule" id="PRU00441"/>
    </source>
</evidence>
<evidence type="ECO:0000305" key="3"/>
<gene>
    <name type="ordered locus">BMEII0209</name>
</gene>
<protein>
    <recommendedName>
        <fullName>Putative peptide transport system permease protein BMEII0209</fullName>
    </recommendedName>
</protein>
<reference key="1">
    <citation type="journal article" date="2002" name="Proc. Natl. Acad. Sci. U.S.A.">
        <title>The genome sequence of the facultative intracellular pathogen Brucella melitensis.</title>
        <authorList>
            <person name="DelVecchio V.G."/>
            <person name="Kapatral V."/>
            <person name="Redkar R.J."/>
            <person name="Patra G."/>
            <person name="Mujer C."/>
            <person name="Los T."/>
            <person name="Ivanova N."/>
            <person name="Anderson I."/>
            <person name="Bhattacharyya A."/>
            <person name="Lykidis A."/>
            <person name="Reznik G."/>
            <person name="Jablonski L."/>
            <person name="Larsen N."/>
            <person name="D'Souza M."/>
            <person name="Bernal A."/>
            <person name="Mazur M."/>
            <person name="Goltsman E."/>
            <person name="Selkov E."/>
            <person name="Elzer P.H."/>
            <person name="Hagius S."/>
            <person name="O'Callaghan D."/>
            <person name="Letesson J.-J."/>
            <person name="Haselkorn R."/>
            <person name="Kyrpides N.C."/>
            <person name="Overbeek R."/>
        </authorList>
    </citation>
    <scope>NUCLEOTIDE SEQUENCE [LARGE SCALE GENOMIC DNA]</scope>
    <source>
        <strain>ATCC 23456 / CCUG 17765 / NCTC 10094 / 16M</strain>
    </source>
</reference>